<evidence type="ECO:0000255" key="1">
    <source>
        <dbReference type="HAMAP-Rule" id="MF_00160"/>
    </source>
</evidence>
<name>SERC_CAMJD</name>
<sequence>MRKINFSAGPSTLPLEILEQAQKEFCDYQGKGYSIMEISHRTKVFEEVHFGAQEKAKKLYGLNDDYEVLFLQGGASLQFAMIPMNLALNGVCEYVNTGVWTKKAIKEAQILGVNVKIVVSSEESNFDHIPRVEFSDNADYAYICSNNTIYGTQYQNYPKTKAPLIVDASSDFFSRKVDFSNIALFYGGVQKNAGISGLSCIFIRKDMLERSKNKQIPSMLNYLTHAENQSLFNTPPTFAIYMFNLEMDWLLNQGGLDKVHEKNSQKATMLYKCIDLSDGFYKGHADKKDRSLMNVSFNIAKNKDLEPLFVKEAEEAGMIGLKGHRILGGIRASIYNALNLDQVKILCEFMKEFQGKYA</sequence>
<gene>
    <name evidence="1" type="primary">serC</name>
    <name type="ordered locus">JJD26997_1632</name>
</gene>
<keyword id="KW-0028">Amino-acid biosynthesis</keyword>
<keyword id="KW-0032">Aminotransferase</keyword>
<keyword id="KW-0963">Cytoplasm</keyword>
<keyword id="KW-0663">Pyridoxal phosphate</keyword>
<keyword id="KW-0664">Pyridoxine biosynthesis</keyword>
<keyword id="KW-0718">Serine biosynthesis</keyword>
<keyword id="KW-0808">Transferase</keyword>
<accession>A7H543</accession>
<feature type="chain" id="PRO_1000058207" description="Phosphoserine aminotransferase">
    <location>
        <begin position="1"/>
        <end position="358"/>
    </location>
</feature>
<feature type="binding site" evidence="1">
    <location>
        <position position="41"/>
    </location>
    <ligand>
        <name>L-glutamate</name>
        <dbReference type="ChEBI" id="CHEBI:29985"/>
    </ligand>
</feature>
<feature type="binding site" evidence="1">
    <location>
        <begin position="75"/>
        <end position="76"/>
    </location>
    <ligand>
        <name>pyridoxal 5'-phosphate</name>
        <dbReference type="ChEBI" id="CHEBI:597326"/>
    </ligand>
</feature>
<feature type="binding site" evidence="1">
    <location>
        <position position="100"/>
    </location>
    <ligand>
        <name>pyridoxal 5'-phosphate</name>
        <dbReference type="ChEBI" id="CHEBI:597326"/>
    </ligand>
</feature>
<feature type="binding site" evidence="1">
    <location>
        <position position="148"/>
    </location>
    <ligand>
        <name>pyridoxal 5'-phosphate</name>
        <dbReference type="ChEBI" id="CHEBI:597326"/>
    </ligand>
</feature>
<feature type="binding site" evidence="1">
    <location>
        <position position="167"/>
    </location>
    <ligand>
        <name>pyridoxal 5'-phosphate</name>
        <dbReference type="ChEBI" id="CHEBI:597326"/>
    </ligand>
</feature>
<feature type="binding site" evidence="1">
    <location>
        <position position="190"/>
    </location>
    <ligand>
        <name>pyridoxal 5'-phosphate</name>
        <dbReference type="ChEBI" id="CHEBI:597326"/>
    </ligand>
</feature>
<feature type="binding site" evidence="1">
    <location>
        <begin position="233"/>
        <end position="234"/>
    </location>
    <ligand>
        <name>pyridoxal 5'-phosphate</name>
        <dbReference type="ChEBI" id="CHEBI:597326"/>
    </ligand>
</feature>
<feature type="modified residue" description="N6-(pyridoxal phosphate)lysine" evidence="1">
    <location>
        <position position="191"/>
    </location>
</feature>
<organism>
    <name type="scientific">Campylobacter jejuni subsp. doylei (strain ATCC BAA-1458 / RM4099 / 269.97)</name>
    <dbReference type="NCBI Taxonomy" id="360109"/>
    <lineage>
        <taxon>Bacteria</taxon>
        <taxon>Pseudomonadati</taxon>
        <taxon>Campylobacterota</taxon>
        <taxon>Epsilonproteobacteria</taxon>
        <taxon>Campylobacterales</taxon>
        <taxon>Campylobacteraceae</taxon>
        <taxon>Campylobacter</taxon>
    </lineage>
</organism>
<protein>
    <recommendedName>
        <fullName evidence="1">Phosphoserine aminotransferase</fullName>
        <ecNumber evidence="1">2.6.1.52</ecNumber>
    </recommendedName>
    <alternativeName>
        <fullName evidence="1">Phosphohydroxythreonine aminotransferase</fullName>
        <shortName evidence="1">PSAT</shortName>
    </alternativeName>
</protein>
<dbReference type="EC" id="2.6.1.52" evidence="1"/>
<dbReference type="EMBL" id="CP000768">
    <property type="protein sequence ID" value="ABS43644.1"/>
    <property type="molecule type" value="Genomic_DNA"/>
</dbReference>
<dbReference type="SMR" id="A7H543"/>
<dbReference type="KEGG" id="cjd:JJD26997_1632"/>
<dbReference type="HOGENOM" id="CLU_034866_0_2_7"/>
<dbReference type="UniPathway" id="UPA00135">
    <property type="reaction ID" value="UER00197"/>
</dbReference>
<dbReference type="UniPathway" id="UPA00244">
    <property type="reaction ID" value="UER00311"/>
</dbReference>
<dbReference type="Proteomes" id="UP000002302">
    <property type="component" value="Chromosome"/>
</dbReference>
<dbReference type="GO" id="GO:0005737">
    <property type="term" value="C:cytoplasm"/>
    <property type="evidence" value="ECO:0007669"/>
    <property type="project" value="UniProtKB-SubCell"/>
</dbReference>
<dbReference type="GO" id="GO:0004648">
    <property type="term" value="F:O-phospho-L-serine:2-oxoglutarate aminotransferase activity"/>
    <property type="evidence" value="ECO:0007669"/>
    <property type="project" value="UniProtKB-UniRule"/>
</dbReference>
<dbReference type="GO" id="GO:0030170">
    <property type="term" value="F:pyridoxal phosphate binding"/>
    <property type="evidence" value="ECO:0007669"/>
    <property type="project" value="UniProtKB-UniRule"/>
</dbReference>
<dbReference type="GO" id="GO:0006564">
    <property type="term" value="P:L-serine biosynthetic process"/>
    <property type="evidence" value="ECO:0007669"/>
    <property type="project" value="UniProtKB-UniRule"/>
</dbReference>
<dbReference type="GO" id="GO:0008615">
    <property type="term" value="P:pyridoxine biosynthetic process"/>
    <property type="evidence" value="ECO:0007669"/>
    <property type="project" value="UniProtKB-UniRule"/>
</dbReference>
<dbReference type="CDD" id="cd00611">
    <property type="entry name" value="PSAT_like"/>
    <property type="match status" value="1"/>
</dbReference>
<dbReference type="FunFam" id="3.40.640.10:FF:000010">
    <property type="entry name" value="Phosphoserine aminotransferase"/>
    <property type="match status" value="1"/>
</dbReference>
<dbReference type="FunFam" id="3.90.1150.10:FF:000006">
    <property type="entry name" value="Phosphoserine aminotransferase"/>
    <property type="match status" value="1"/>
</dbReference>
<dbReference type="Gene3D" id="3.90.1150.10">
    <property type="entry name" value="Aspartate Aminotransferase, domain 1"/>
    <property type="match status" value="1"/>
</dbReference>
<dbReference type="Gene3D" id="3.40.640.10">
    <property type="entry name" value="Type I PLP-dependent aspartate aminotransferase-like (Major domain)"/>
    <property type="match status" value="1"/>
</dbReference>
<dbReference type="HAMAP" id="MF_00160">
    <property type="entry name" value="SerC_aminotrans_5"/>
    <property type="match status" value="1"/>
</dbReference>
<dbReference type="InterPro" id="IPR000192">
    <property type="entry name" value="Aminotrans_V_dom"/>
</dbReference>
<dbReference type="InterPro" id="IPR022278">
    <property type="entry name" value="Pser_aminoTfrase"/>
</dbReference>
<dbReference type="InterPro" id="IPR015424">
    <property type="entry name" value="PyrdxlP-dep_Trfase"/>
</dbReference>
<dbReference type="InterPro" id="IPR015421">
    <property type="entry name" value="PyrdxlP-dep_Trfase_major"/>
</dbReference>
<dbReference type="InterPro" id="IPR015422">
    <property type="entry name" value="PyrdxlP-dep_Trfase_small"/>
</dbReference>
<dbReference type="NCBIfam" id="NF003764">
    <property type="entry name" value="PRK05355.1"/>
    <property type="match status" value="1"/>
</dbReference>
<dbReference type="NCBIfam" id="TIGR01364">
    <property type="entry name" value="serC_1"/>
    <property type="match status" value="1"/>
</dbReference>
<dbReference type="PANTHER" id="PTHR43247">
    <property type="entry name" value="PHOSPHOSERINE AMINOTRANSFERASE"/>
    <property type="match status" value="1"/>
</dbReference>
<dbReference type="PANTHER" id="PTHR43247:SF1">
    <property type="entry name" value="PHOSPHOSERINE AMINOTRANSFERASE"/>
    <property type="match status" value="1"/>
</dbReference>
<dbReference type="Pfam" id="PF00266">
    <property type="entry name" value="Aminotran_5"/>
    <property type="match status" value="1"/>
</dbReference>
<dbReference type="PIRSF" id="PIRSF000525">
    <property type="entry name" value="SerC"/>
    <property type="match status" value="1"/>
</dbReference>
<dbReference type="SUPFAM" id="SSF53383">
    <property type="entry name" value="PLP-dependent transferases"/>
    <property type="match status" value="1"/>
</dbReference>
<reference key="1">
    <citation type="submission" date="2007-07" db="EMBL/GenBank/DDBJ databases">
        <title>Complete genome sequence of Campylobacter jejuni subsp doylei 269.97 isolated from human blood.</title>
        <authorList>
            <person name="Fouts D.E."/>
            <person name="Mongodin E.F."/>
            <person name="Puiu D."/>
            <person name="Sebastian Y."/>
            <person name="Miller W.G."/>
            <person name="Mandrell R.E."/>
            <person name="Lastovica A.J."/>
            <person name="Nelson K.E."/>
        </authorList>
    </citation>
    <scope>NUCLEOTIDE SEQUENCE [LARGE SCALE GENOMIC DNA]</scope>
    <source>
        <strain>ATCC BAA-1458 / RM4099 / 269.97</strain>
    </source>
</reference>
<comment type="function">
    <text evidence="1">Catalyzes the reversible conversion of 3-phosphohydroxypyruvate to phosphoserine and of 3-hydroxy-2-oxo-4-phosphonooxybutanoate to phosphohydroxythreonine.</text>
</comment>
<comment type="catalytic activity">
    <reaction evidence="1">
        <text>O-phospho-L-serine + 2-oxoglutarate = 3-phosphooxypyruvate + L-glutamate</text>
        <dbReference type="Rhea" id="RHEA:14329"/>
        <dbReference type="ChEBI" id="CHEBI:16810"/>
        <dbReference type="ChEBI" id="CHEBI:18110"/>
        <dbReference type="ChEBI" id="CHEBI:29985"/>
        <dbReference type="ChEBI" id="CHEBI:57524"/>
        <dbReference type="EC" id="2.6.1.52"/>
    </reaction>
</comment>
<comment type="catalytic activity">
    <reaction evidence="1">
        <text>4-(phosphooxy)-L-threonine + 2-oxoglutarate = (R)-3-hydroxy-2-oxo-4-phosphooxybutanoate + L-glutamate</text>
        <dbReference type="Rhea" id="RHEA:16573"/>
        <dbReference type="ChEBI" id="CHEBI:16810"/>
        <dbReference type="ChEBI" id="CHEBI:29985"/>
        <dbReference type="ChEBI" id="CHEBI:58452"/>
        <dbReference type="ChEBI" id="CHEBI:58538"/>
        <dbReference type="EC" id="2.6.1.52"/>
    </reaction>
</comment>
<comment type="cofactor">
    <cofactor evidence="1">
        <name>pyridoxal 5'-phosphate</name>
        <dbReference type="ChEBI" id="CHEBI:597326"/>
    </cofactor>
    <text evidence="1">Binds 1 pyridoxal phosphate per subunit.</text>
</comment>
<comment type="pathway">
    <text evidence="1">Amino-acid biosynthesis; L-serine biosynthesis; L-serine from 3-phospho-D-glycerate: step 2/3.</text>
</comment>
<comment type="pathway">
    <text evidence="1">Cofactor biosynthesis; pyridoxine 5'-phosphate biosynthesis; pyridoxine 5'-phosphate from D-erythrose 4-phosphate: step 3/5.</text>
</comment>
<comment type="subunit">
    <text evidence="1">Homodimer.</text>
</comment>
<comment type="subcellular location">
    <subcellularLocation>
        <location evidence="1">Cytoplasm</location>
    </subcellularLocation>
</comment>
<comment type="similarity">
    <text evidence="1">Belongs to the class-V pyridoxal-phosphate-dependent aminotransferase family. SerC subfamily.</text>
</comment>
<proteinExistence type="inferred from homology"/>